<evidence type="ECO:0000305" key="1"/>
<name>RLP24_ENCCU</name>
<feature type="chain" id="PRO_0000136888" description="Probable ribosome biogenesis protein RLP24">
    <location>
        <begin position="1"/>
        <end position="155"/>
    </location>
</feature>
<reference key="1">
    <citation type="journal article" date="2001" name="Nature">
        <title>Genome sequence and gene compaction of the eukaryote parasite Encephalitozoon cuniculi.</title>
        <authorList>
            <person name="Katinka M.D."/>
            <person name="Duprat S."/>
            <person name="Cornillot E."/>
            <person name="Metenier G."/>
            <person name="Thomarat F."/>
            <person name="Prensier G."/>
            <person name="Barbe V."/>
            <person name="Peyretaillade E."/>
            <person name="Brottier P."/>
            <person name="Wincker P."/>
            <person name="Delbac F."/>
            <person name="El Alaoui H."/>
            <person name="Peyret P."/>
            <person name="Saurin W."/>
            <person name="Gouy M."/>
            <person name="Weissenbach J."/>
            <person name="Vivares C.P."/>
        </authorList>
    </citation>
    <scope>NUCLEOTIDE SEQUENCE [LARGE SCALE GENOMIC DNA]</scope>
    <source>
        <strain>GB-M1</strain>
    </source>
</reference>
<organism>
    <name type="scientific">Encephalitozoon cuniculi (strain GB-M1)</name>
    <name type="common">Microsporidian parasite</name>
    <dbReference type="NCBI Taxonomy" id="284813"/>
    <lineage>
        <taxon>Eukaryota</taxon>
        <taxon>Fungi</taxon>
        <taxon>Fungi incertae sedis</taxon>
        <taxon>Microsporidia</taxon>
        <taxon>Unikaryonidae</taxon>
        <taxon>Encephalitozoon</taxon>
    </lineage>
</organism>
<protein>
    <recommendedName>
        <fullName>Probable ribosome biogenesis protein RLP24</fullName>
    </recommendedName>
</protein>
<gene>
    <name type="primary">RPL24</name>
    <name type="ordered locus">ECU02_0810</name>
</gene>
<accession>Q8SSF6</accession>
<sequence length="155" mass="18623">MRIEKCWFCSSNIYQGHGTIYVRNDAKVFRFCRPKCRKLFARRVNPRKVKWTKISRKMANKELCNDAILTFEHRLNEPRMYDRAEAERTLSSIPRILEIRKRREDFFIKDRILTGQEMNKESDLKYIERHANLLEEEVAGEKQVAKAKKREAQTN</sequence>
<dbReference type="EMBL" id="AL590442">
    <property type="protein sequence ID" value="CAD25110.1"/>
    <property type="molecule type" value="Genomic_DNA"/>
</dbReference>
<dbReference type="RefSeq" id="NP_584606.1">
    <property type="nucleotide sequence ID" value="NM_001040795.1"/>
</dbReference>
<dbReference type="SMR" id="Q8SSF6"/>
<dbReference type="FunCoup" id="Q8SSF6">
    <property type="interactions" value="253"/>
</dbReference>
<dbReference type="STRING" id="284813.Q8SSF6"/>
<dbReference type="GeneID" id="858596"/>
<dbReference type="KEGG" id="ecu:ECU02_0810"/>
<dbReference type="VEuPathDB" id="MicrosporidiaDB:ECU02_0810"/>
<dbReference type="HOGENOM" id="CLU_089419_2_2_1"/>
<dbReference type="InParanoid" id="Q8SSF6"/>
<dbReference type="OMA" id="TCYFCSG"/>
<dbReference type="OrthoDB" id="10262490at2759"/>
<dbReference type="Proteomes" id="UP000000819">
    <property type="component" value="Chromosome II"/>
</dbReference>
<dbReference type="GO" id="GO:0005730">
    <property type="term" value="C:nucleolus"/>
    <property type="evidence" value="ECO:0007669"/>
    <property type="project" value="TreeGrafter"/>
</dbReference>
<dbReference type="GO" id="GO:0003735">
    <property type="term" value="F:structural constituent of ribosome"/>
    <property type="evidence" value="ECO:0007669"/>
    <property type="project" value="InterPro"/>
</dbReference>
<dbReference type="GO" id="GO:0042273">
    <property type="term" value="P:ribosomal large subunit biogenesis"/>
    <property type="evidence" value="ECO:0007669"/>
    <property type="project" value="TreeGrafter"/>
</dbReference>
<dbReference type="CDD" id="cd00472">
    <property type="entry name" value="Ribosomal_L24e_L24"/>
    <property type="match status" value="1"/>
</dbReference>
<dbReference type="FunFam" id="2.30.170.20:FF:000001">
    <property type="entry name" value="probable ribosome biogenesis protein RLP24"/>
    <property type="match status" value="1"/>
</dbReference>
<dbReference type="Gene3D" id="2.30.170.20">
    <property type="entry name" value="Ribosomal protein L24e"/>
    <property type="match status" value="1"/>
</dbReference>
<dbReference type="InterPro" id="IPR038630">
    <property type="entry name" value="L24e/L24_sf"/>
</dbReference>
<dbReference type="InterPro" id="IPR056366">
    <property type="entry name" value="Ribosomal_eL24"/>
</dbReference>
<dbReference type="InterPro" id="IPR000988">
    <property type="entry name" value="Ribosomal_eL24-rel_N"/>
</dbReference>
<dbReference type="InterPro" id="IPR011017">
    <property type="entry name" value="TRASH_dom"/>
</dbReference>
<dbReference type="PANTHER" id="PTHR10792">
    <property type="entry name" value="60S RIBOSOMAL PROTEIN L24"/>
    <property type="match status" value="1"/>
</dbReference>
<dbReference type="PANTHER" id="PTHR10792:SF8">
    <property type="entry name" value="RIBOSOME BIOGENESIS PROTEIN RLP24-RELATED"/>
    <property type="match status" value="1"/>
</dbReference>
<dbReference type="Pfam" id="PF01246">
    <property type="entry name" value="Ribosomal_L24e"/>
    <property type="match status" value="1"/>
</dbReference>
<dbReference type="SMART" id="SM00746">
    <property type="entry name" value="TRASH"/>
    <property type="match status" value="1"/>
</dbReference>
<dbReference type="SUPFAM" id="SSF57716">
    <property type="entry name" value="Glucocorticoid receptor-like (DNA-binding domain)"/>
    <property type="match status" value="1"/>
</dbReference>
<comment type="similarity">
    <text evidence="1">Belongs to the eukaryotic ribosomal protein eL24 family.</text>
</comment>
<proteinExistence type="inferred from homology"/>
<keyword id="KW-1185">Reference proteome</keyword>
<keyword id="KW-0690">Ribosome biogenesis</keyword>